<protein>
    <recommendedName>
        <fullName evidence="1">Glutamate-1-semialdehyde 2,1-aminomutase</fullName>
        <shortName evidence="1">GSA</shortName>
        <ecNumber evidence="1">5.4.3.8</ecNumber>
    </recommendedName>
    <alternativeName>
        <fullName evidence="1">Glutamate-1-semialdehyde aminotransferase</fullName>
        <shortName evidence="1">GSA-AT</shortName>
    </alternativeName>
</protein>
<reference key="1">
    <citation type="submission" date="2007-07" db="EMBL/GenBank/DDBJ databases">
        <title>Genome sequence of Campylobacter curvus 525.92 isolated from human feces.</title>
        <authorList>
            <person name="Fouts D.E."/>
            <person name="Mongodin E.F."/>
            <person name="Puiu D."/>
            <person name="Sebastian Y."/>
            <person name="Miller W.G."/>
            <person name="Mandrell R.E."/>
            <person name="Lastovica A.J."/>
            <person name="Nelson K.E."/>
        </authorList>
    </citation>
    <scope>NUCLEOTIDE SEQUENCE [LARGE SCALE GENOMIC DNA]</scope>
    <source>
        <strain>525.92</strain>
    </source>
</reference>
<accession>A7GXK4</accession>
<comment type="catalytic activity">
    <reaction evidence="1">
        <text>(S)-4-amino-5-oxopentanoate = 5-aminolevulinate</text>
        <dbReference type="Rhea" id="RHEA:14265"/>
        <dbReference type="ChEBI" id="CHEBI:57501"/>
        <dbReference type="ChEBI" id="CHEBI:356416"/>
        <dbReference type="EC" id="5.4.3.8"/>
    </reaction>
</comment>
<comment type="cofactor">
    <cofactor evidence="1">
        <name>pyridoxal 5'-phosphate</name>
        <dbReference type="ChEBI" id="CHEBI:597326"/>
    </cofactor>
</comment>
<comment type="pathway">
    <text evidence="1">Porphyrin-containing compound metabolism; protoporphyrin-IX biosynthesis; 5-aminolevulinate from L-glutamyl-tRNA(Glu): step 2/2.</text>
</comment>
<comment type="subunit">
    <text evidence="1">Homodimer.</text>
</comment>
<comment type="subcellular location">
    <subcellularLocation>
        <location evidence="1">Cytoplasm</location>
    </subcellularLocation>
</comment>
<comment type="similarity">
    <text evidence="1">Belongs to the class-III pyridoxal-phosphate-dependent aminotransferase family. HemL subfamily.</text>
</comment>
<organism>
    <name type="scientific">Campylobacter curvus (strain 525.92)</name>
    <dbReference type="NCBI Taxonomy" id="360105"/>
    <lineage>
        <taxon>Bacteria</taxon>
        <taxon>Pseudomonadati</taxon>
        <taxon>Campylobacterota</taxon>
        <taxon>Epsilonproteobacteria</taxon>
        <taxon>Campylobacterales</taxon>
        <taxon>Campylobacteraceae</taxon>
        <taxon>Campylobacter</taxon>
    </lineage>
</organism>
<gene>
    <name evidence="1" type="primary">hemL</name>
    <name type="ordered locus">Ccur92_06420</name>
    <name type="ORF">CCV52592_0797</name>
</gene>
<feature type="chain" id="PRO_1000059980" description="Glutamate-1-semialdehyde 2,1-aminomutase">
    <location>
        <begin position="1"/>
        <end position="429"/>
    </location>
</feature>
<feature type="modified residue" description="N6-(pyridoxal phosphate)lysine" evidence="1">
    <location>
        <position position="264"/>
    </location>
</feature>
<name>GSA_CAMC5</name>
<evidence type="ECO:0000255" key="1">
    <source>
        <dbReference type="HAMAP-Rule" id="MF_00375"/>
    </source>
</evidence>
<sequence>MTNKEAFSEAKKFIAGGVNSPVRAFGSVGGEPIIIDHGKGAYIYDIEGKKYLDFIQSWGPLIFGHCDADIEKAVIEAVKKGLSFGAPTLVETTLAKILCEKFENLDKIRFVSSGTEATMSAIRVARGYSKKDGLIKFEGCYHGHSDALLIKAGSGATTYGNASSGGVPQDVVRNTYLAVYNDAASVEAIFESNPGKIGAVIIEPIAGNMGLVPADKEFLQSLRALCDKFGAVLILDEVMSGFRASEFGSLPYHGILADLVTFGKVIGGGMNAAAFGGKREIMDCLSPDGAVYQAGTLSGNPIAMSAGIAALSKINASKNLYAKLENLARRLMQGFKAAANEADIALQTNVRGSMFGYFFTPHAVKNYDDALKSDTRLFAKFHAAMLKRGVYLAPSQFETGFVCEPMSEADIDFAVNAAREAFKEIKRNG</sequence>
<keyword id="KW-0963">Cytoplasm</keyword>
<keyword id="KW-0413">Isomerase</keyword>
<keyword id="KW-0627">Porphyrin biosynthesis</keyword>
<keyword id="KW-0663">Pyridoxal phosphate</keyword>
<keyword id="KW-1185">Reference proteome</keyword>
<proteinExistence type="inferred from homology"/>
<dbReference type="EC" id="5.4.3.8" evidence="1"/>
<dbReference type="EMBL" id="CP000767">
    <property type="protein sequence ID" value="EAT99465.2"/>
    <property type="molecule type" value="Genomic_DNA"/>
</dbReference>
<dbReference type="RefSeq" id="WP_011992080.1">
    <property type="nucleotide sequence ID" value="NC_009715.2"/>
</dbReference>
<dbReference type="SMR" id="A7GXK4"/>
<dbReference type="STRING" id="360105.CCV52592_0797"/>
<dbReference type="KEGG" id="ccv:CCV52592_0797"/>
<dbReference type="HOGENOM" id="CLU_016922_1_5_7"/>
<dbReference type="OrthoDB" id="9801052at2"/>
<dbReference type="UniPathway" id="UPA00251">
    <property type="reaction ID" value="UER00317"/>
</dbReference>
<dbReference type="Proteomes" id="UP000006380">
    <property type="component" value="Chromosome"/>
</dbReference>
<dbReference type="GO" id="GO:0005737">
    <property type="term" value="C:cytoplasm"/>
    <property type="evidence" value="ECO:0007669"/>
    <property type="project" value="UniProtKB-SubCell"/>
</dbReference>
<dbReference type="GO" id="GO:0042286">
    <property type="term" value="F:glutamate-1-semialdehyde 2,1-aminomutase activity"/>
    <property type="evidence" value="ECO:0007669"/>
    <property type="project" value="UniProtKB-UniRule"/>
</dbReference>
<dbReference type="GO" id="GO:0030170">
    <property type="term" value="F:pyridoxal phosphate binding"/>
    <property type="evidence" value="ECO:0007669"/>
    <property type="project" value="InterPro"/>
</dbReference>
<dbReference type="GO" id="GO:0008483">
    <property type="term" value="F:transaminase activity"/>
    <property type="evidence" value="ECO:0007669"/>
    <property type="project" value="InterPro"/>
</dbReference>
<dbReference type="GO" id="GO:0006782">
    <property type="term" value="P:protoporphyrinogen IX biosynthetic process"/>
    <property type="evidence" value="ECO:0007669"/>
    <property type="project" value="UniProtKB-UniRule"/>
</dbReference>
<dbReference type="CDD" id="cd00610">
    <property type="entry name" value="OAT_like"/>
    <property type="match status" value="1"/>
</dbReference>
<dbReference type="FunFam" id="3.40.640.10:FF:000021">
    <property type="entry name" value="Glutamate-1-semialdehyde 2,1-aminomutase"/>
    <property type="match status" value="1"/>
</dbReference>
<dbReference type="Gene3D" id="3.90.1150.10">
    <property type="entry name" value="Aspartate Aminotransferase, domain 1"/>
    <property type="match status" value="1"/>
</dbReference>
<dbReference type="Gene3D" id="3.40.640.10">
    <property type="entry name" value="Type I PLP-dependent aspartate aminotransferase-like (Major domain)"/>
    <property type="match status" value="1"/>
</dbReference>
<dbReference type="HAMAP" id="MF_00375">
    <property type="entry name" value="HemL_aminotrans_3"/>
    <property type="match status" value="1"/>
</dbReference>
<dbReference type="InterPro" id="IPR004639">
    <property type="entry name" value="4pyrrol_synth_GluAld_NH2Trfase"/>
</dbReference>
<dbReference type="InterPro" id="IPR005814">
    <property type="entry name" value="Aminotrans_3"/>
</dbReference>
<dbReference type="InterPro" id="IPR049704">
    <property type="entry name" value="Aminotrans_3_PPA_site"/>
</dbReference>
<dbReference type="InterPro" id="IPR015424">
    <property type="entry name" value="PyrdxlP-dep_Trfase"/>
</dbReference>
<dbReference type="InterPro" id="IPR015421">
    <property type="entry name" value="PyrdxlP-dep_Trfase_major"/>
</dbReference>
<dbReference type="InterPro" id="IPR015422">
    <property type="entry name" value="PyrdxlP-dep_Trfase_small"/>
</dbReference>
<dbReference type="NCBIfam" id="TIGR00713">
    <property type="entry name" value="hemL"/>
    <property type="match status" value="1"/>
</dbReference>
<dbReference type="NCBIfam" id="NF000818">
    <property type="entry name" value="PRK00062.1"/>
    <property type="match status" value="1"/>
</dbReference>
<dbReference type="PANTHER" id="PTHR43713">
    <property type="entry name" value="GLUTAMATE-1-SEMIALDEHYDE 2,1-AMINOMUTASE"/>
    <property type="match status" value="1"/>
</dbReference>
<dbReference type="PANTHER" id="PTHR43713:SF3">
    <property type="entry name" value="GLUTAMATE-1-SEMIALDEHYDE 2,1-AMINOMUTASE 1, CHLOROPLASTIC-RELATED"/>
    <property type="match status" value="1"/>
</dbReference>
<dbReference type="Pfam" id="PF00202">
    <property type="entry name" value="Aminotran_3"/>
    <property type="match status" value="1"/>
</dbReference>
<dbReference type="SUPFAM" id="SSF53383">
    <property type="entry name" value="PLP-dependent transferases"/>
    <property type="match status" value="1"/>
</dbReference>
<dbReference type="PROSITE" id="PS00600">
    <property type="entry name" value="AA_TRANSFER_CLASS_3"/>
    <property type="match status" value="1"/>
</dbReference>